<evidence type="ECO:0000255" key="1">
    <source>
        <dbReference type="HAMAP-Rule" id="MF_00758"/>
    </source>
</evidence>
<evidence type="ECO:0000305" key="2"/>
<name>Y1459_GLUOX</name>
<reference key="1">
    <citation type="journal article" date="2005" name="Nat. Biotechnol.">
        <title>Complete genome sequence of the acetic acid bacterium Gluconobacter oxydans.</title>
        <authorList>
            <person name="Prust C."/>
            <person name="Hoffmeister M."/>
            <person name="Liesegang H."/>
            <person name="Wiezer A."/>
            <person name="Fricke W.F."/>
            <person name="Ehrenreich A."/>
            <person name="Gottschalk G."/>
            <person name="Deppenmeier U."/>
        </authorList>
    </citation>
    <scope>NUCLEOTIDE SEQUENCE [LARGE SCALE GENOMIC DNA]</scope>
    <source>
        <strain>621H</strain>
    </source>
</reference>
<dbReference type="EMBL" id="CP000009">
    <property type="protein sequence ID" value="AAW61208.1"/>
    <property type="status" value="ALT_INIT"/>
    <property type="molecule type" value="Genomic_DNA"/>
</dbReference>
<dbReference type="SMR" id="Q5FQY8"/>
<dbReference type="STRING" id="290633.GOX1459"/>
<dbReference type="KEGG" id="gox:GOX1459"/>
<dbReference type="eggNOG" id="COG1678">
    <property type="taxonomic scope" value="Bacteria"/>
</dbReference>
<dbReference type="HOGENOM" id="CLU_057596_1_0_5"/>
<dbReference type="Proteomes" id="UP000006375">
    <property type="component" value="Chromosome"/>
</dbReference>
<dbReference type="GO" id="GO:0005829">
    <property type="term" value="C:cytosol"/>
    <property type="evidence" value="ECO:0007669"/>
    <property type="project" value="TreeGrafter"/>
</dbReference>
<dbReference type="Gene3D" id="3.40.1740.10">
    <property type="entry name" value="VC0467-like"/>
    <property type="match status" value="1"/>
</dbReference>
<dbReference type="HAMAP" id="MF_00758">
    <property type="entry name" value="UPF0301"/>
    <property type="match status" value="1"/>
</dbReference>
<dbReference type="InterPro" id="IPR003774">
    <property type="entry name" value="AlgH-like"/>
</dbReference>
<dbReference type="PANTHER" id="PTHR30327">
    <property type="entry name" value="UNCHARACTERIZED PROTEIN YQGE"/>
    <property type="match status" value="1"/>
</dbReference>
<dbReference type="PANTHER" id="PTHR30327:SF1">
    <property type="entry name" value="UPF0301 PROTEIN YQGE"/>
    <property type="match status" value="1"/>
</dbReference>
<dbReference type="Pfam" id="PF02622">
    <property type="entry name" value="DUF179"/>
    <property type="match status" value="1"/>
</dbReference>
<dbReference type="SUPFAM" id="SSF143456">
    <property type="entry name" value="VC0467-like"/>
    <property type="match status" value="1"/>
</dbReference>
<gene>
    <name type="ordered locus">GOX1459</name>
</gene>
<protein>
    <recommendedName>
        <fullName evidence="1">UPF0301 protein GOX1459</fullName>
    </recommendedName>
</protein>
<accession>Q5FQY8</accession>
<comment type="similarity">
    <text evidence="1">Belongs to the UPF0301 (AlgH) family.</text>
</comment>
<comment type="sequence caution" evidence="2">
    <conflict type="erroneous initiation">
        <sequence resource="EMBL-CDS" id="AAW61208"/>
    </conflict>
</comment>
<sequence length="187" mass="20018">MELGLTGKLLVAAPALAETFFERTVIYLCAHSEQDGAMGLIVNRRLSQPGLDDLFAQLGIEPSPPERRIGVCMGGPVEHARGFVLHSADWAGEGSLDVDGHTTLTASLDILREIAAGHGPRQAVMALGHAAWAPGQLEEEILRDSSWFIAPATDEIVFGTDHAKKWRQALVAIDFDPLLLSSSVGEA</sequence>
<keyword id="KW-1185">Reference proteome</keyword>
<proteinExistence type="inferred from homology"/>
<organism>
    <name type="scientific">Gluconobacter oxydans (strain 621H)</name>
    <name type="common">Gluconobacter suboxydans</name>
    <dbReference type="NCBI Taxonomy" id="290633"/>
    <lineage>
        <taxon>Bacteria</taxon>
        <taxon>Pseudomonadati</taxon>
        <taxon>Pseudomonadota</taxon>
        <taxon>Alphaproteobacteria</taxon>
        <taxon>Acetobacterales</taxon>
        <taxon>Acetobacteraceae</taxon>
        <taxon>Gluconobacter</taxon>
    </lineage>
</organism>
<feature type="chain" id="PRO_0000258829" description="UPF0301 protein GOX1459">
    <location>
        <begin position="1"/>
        <end position="187"/>
    </location>
</feature>